<sequence length="523" mass="58954">MELTLWTYEGPPHVGAMRIASSMKDIHYVLHAPQGDTYADLLFTMIERRGQRPPVTYTTFQARDLGGDTAELVKKNIKEAVERFKPKTLLVGESCTAELIQDQPGALAKGMGFDMPIVNLELPAYSKKENWGASETFYQLTRTLLKEKVGSSEKISPLRWKELGRRPKVNILGPSLLGFRCRDDVIEIQRILSEQGIDTNVVAPLGANPNDIERLIDAEINICLYQEIAEASCEWLKRNFGMEYTNTIPIGIKNTIEFINEVHNKLDLPLTNKKELEHKSKLPWYSKSVDSNYLTGKRVFIFGDGTHAIAAAKIAKDELGFEVVGIGTYSREMARQVRATAKELNVEALITNNYLEVEDAMKKAAPELVLGTQMERHSAKRLGIPCAVISTPMHVQDVPARYSPQMGWEGANVIFDDWVHPLMMGLEEHLIDMFKHDFEFVDGHQSHLGHTATKTKDLINSDNKKDNNPKEGIIWTESGRAELTKVPFFVRGKVKTNTEKYAILRGIPEISDETLYDAKAYFS</sequence>
<comment type="function">
    <text evidence="1">Component of the dark-operative protochlorophyllide reductase (DPOR) that uses Mg-ATP and reduced ferredoxin to reduce ring D of protochlorophyllide (Pchlide) to form chlorophyllide a (Chlide). This reaction is light-independent. The NB-protein (ChlN-ChlB) is the catalytic component of the complex.</text>
</comment>
<comment type="catalytic activity">
    <reaction evidence="1">
        <text>chlorophyllide a + oxidized 2[4Fe-4S]-[ferredoxin] + 2 ADP + 2 phosphate = protochlorophyllide a + reduced 2[4Fe-4S]-[ferredoxin] + 2 ATP + 2 H2O</text>
        <dbReference type="Rhea" id="RHEA:28202"/>
        <dbReference type="Rhea" id="RHEA-COMP:10002"/>
        <dbReference type="Rhea" id="RHEA-COMP:10004"/>
        <dbReference type="ChEBI" id="CHEBI:15377"/>
        <dbReference type="ChEBI" id="CHEBI:30616"/>
        <dbReference type="ChEBI" id="CHEBI:33722"/>
        <dbReference type="ChEBI" id="CHEBI:33723"/>
        <dbReference type="ChEBI" id="CHEBI:43474"/>
        <dbReference type="ChEBI" id="CHEBI:83348"/>
        <dbReference type="ChEBI" id="CHEBI:83350"/>
        <dbReference type="ChEBI" id="CHEBI:456216"/>
        <dbReference type="EC" id="1.3.7.7"/>
    </reaction>
</comment>
<comment type="cofactor">
    <cofactor evidence="1">
        <name>[4Fe-4S] cluster</name>
        <dbReference type="ChEBI" id="CHEBI:49883"/>
    </cofactor>
    <text evidence="1">Binds 1 [4Fe-4S] cluster per heterodimer. The cluster is bound at the heterodimer interface by residues from both subunits.</text>
</comment>
<comment type="pathway">
    <text evidence="1">Porphyrin-containing compound metabolism; chlorophyll biosynthesis (light-independent).</text>
</comment>
<comment type="subunit">
    <text evidence="1">Protochlorophyllide reductase is composed of three subunits; ChlL, ChlN and ChlB. Forms a heterotetramer of two ChlB and two ChlN subunits.</text>
</comment>
<comment type="similarity">
    <text evidence="1">Belongs to the ChlB/BchB/BchZ family.</text>
</comment>
<organism>
    <name type="scientific">Prochlorococcus marinus (strain MIT 9215)</name>
    <dbReference type="NCBI Taxonomy" id="93060"/>
    <lineage>
        <taxon>Bacteria</taxon>
        <taxon>Bacillati</taxon>
        <taxon>Cyanobacteriota</taxon>
        <taxon>Cyanophyceae</taxon>
        <taxon>Synechococcales</taxon>
        <taxon>Prochlorococcaceae</taxon>
        <taxon>Prochlorococcus</taxon>
    </lineage>
</organism>
<dbReference type="EC" id="1.3.7.7" evidence="1"/>
<dbReference type="EMBL" id="CP000825">
    <property type="protein sequence ID" value="ABV50240.1"/>
    <property type="molecule type" value="Genomic_DNA"/>
</dbReference>
<dbReference type="RefSeq" id="WP_012007365.1">
    <property type="nucleotide sequence ID" value="NC_009840.1"/>
</dbReference>
<dbReference type="SMR" id="A8G3Q9"/>
<dbReference type="STRING" id="93060.P9215_06251"/>
<dbReference type="KEGG" id="pmh:P9215_06251"/>
<dbReference type="eggNOG" id="COG2710">
    <property type="taxonomic scope" value="Bacteria"/>
</dbReference>
<dbReference type="HOGENOM" id="CLU_025470_0_0_3"/>
<dbReference type="OrthoDB" id="5717231at2"/>
<dbReference type="UniPathway" id="UPA00670"/>
<dbReference type="Proteomes" id="UP000002014">
    <property type="component" value="Chromosome"/>
</dbReference>
<dbReference type="GO" id="GO:0051539">
    <property type="term" value="F:4 iron, 4 sulfur cluster binding"/>
    <property type="evidence" value="ECO:0007669"/>
    <property type="project" value="UniProtKB-UniRule"/>
</dbReference>
<dbReference type="GO" id="GO:0005524">
    <property type="term" value="F:ATP binding"/>
    <property type="evidence" value="ECO:0007669"/>
    <property type="project" value="UniProtKB-UniRule"/>
</dbReference>
<dbReference type="GO" id="GO:0046872">
    <property type="term" value="F:metal ion binding"/>
    <property type="evidence" value="ECO:0007669"/>
    <property type="project" value="UniProtKB-KW"/>
</dbReference>
<dbReference type="GO" id="GO:0016730">
    <property type="term" value="F:oxidoreductase activity, acting on iron-sulfur proteins as donors"/>
    <property type="evidence" value="ECO:0007669"/>
    <property type="project" value="InterPro"/>
</dbReference>
<dbReference type="GO" id="GO:0016636">
    <property type="term" value="F:oxidoreductase activity, acting on the CH-CH group of donors, iron-sulfur protein as acceptor"/>
    <property type="evidence" value="ECO:0007669"/>
    <property type="project" value="UniProtKB-UniRule"/>
</dbReference>
<dbReference type="GO" id="GO:0036068">
    <property type="term" value="P:light-independent chlorophyll biosynthetic process"/>
    <property type="evidence" value="ECO:0007669"/>
    <property type="project" value="UniProtKB-UniRule"/>
</dbReference>
<dbReference type="GO" id="GO:0019685">
    <property type="term" value="P:photosynthesis, dark reaction"/>
    <property type="evidence" value="ECO:0007669"/>
    <property type="project" value="InterPro"/>
</dbReference>
<dbReference type="Gene3D" id="1.20.89.20">
    <property type="match status" value="1"/>
</dbReference>
<dbReference type="Gene3D" id="3.40.50.1980">
    <property type="entry name" value="Nitrogenase molybdenum iron protein domain"/>
    <property type="match status" value="3"/>
</dbReference>
<dbReference type="Gene3D" id="1.10.8.550">
    <property type="entry name" value="Proto-chlorophyllide reductase 57 kD subunit B"/>
    <property type="match status" value="1"/>
</dbReference>
<dbReference type="HAMAP" id="MF_00353">
    <property type="entry name" value="ChlB_BchB"/>
    <property type="match status" value="1"/>
</dbReference>
<dbReference type="InterPro" id="IPR050152">
    <property type="entry name" value="ChlB/BchB/BchZ"/>
</dbReference>
<dbReference type="InterPro" id="IPR013580">
    <property type="entry name" value="LI-POR_suB-like_C"/>
</dbReference>
<dbReference type="InterPro" id="IPR000510">
    <property type="entry name" value="Nase/OxRdtase_comp1"/>
</dbReference>
<dbReference type="InterPro" id="IPR042298">
    <property type="entry name" value="P-CP_red_C"/>
</dbReference>
<dbReference type="InterPro" id="IPR005969">
    <property type="entry name" value="Protochl_reductB"/>
</dbReference>
<dbReference type="InterPro" id="IPR016209">
    <property type="entry name" value="Protochlorophyllide_Rdtase"/>
</dbReference>
<dbReference type="NCBIfam" id="TIGR01278">
    <property type="entry name" value="DPOR_BchB"/>
    <property type="match status" value="1"/>
</dbReference>
<dbReference type="NCBIfam" id="NF002790">
    <property type="entry name" value="PRK02910.1-4"/>
    <property type="match status" value="1"/>
</dbReference>
<dbReference type="PANTHER" id="PTHR33712">
    <property type="entry name" value="LIGHT-INDEPENDENT PROTOCHLOROPHYLLIDE REDUCTASE SUBUNIT B"/>
    <property type="match status" value="1"/>
</dbReference>
<dbReference type="PANTHER" id="PTHR33712:SF7">
    <property type="entry name" value="LIGHT-INDEPENDENT PROTOCHLOROPHYLLIDE REDUCTASE SUBUNIT B"/>
    <property type="match status" value="1"/>
</dbReference>
<dbReference type="Pfam" id="PF00148">
    <property type="entry name" value="Oxidored_nitro"/>
    <property type="match status" value="1"/>
</dbReference>
<dbReference type="Pfam" id="PF08369">
    <property type="entry name" value="PCP_red"/>
    <property type="match status" value="1"/>
</dbReference>
<dbReference type="PIRSF" id="PIRSF000163">
    <property type="entry name" value="PCP_ChlB"/>
    <property type="match status" value="1"/>
</dbReference>
<dbReference type="SUPFAM" id="SSF53807">
    <property type="entry name" value="Helical backbone' metal receptor"/>
    <property type="match status" value="1"/>
</dbReference>
<proteinExistence type="inferred from homology"/>
<name>CHLB_PROM2</name>
<feature type="chain" id="PRO_1000059834" description="Light-independent protochlorophyllide reductase subunit B">
    <location>
        <begin position="1"/>
        <end position="523"/>
    </location>
</feature>
<feature type="active site" description="Proton donor" evidence="1">
    <location>
        <position position="290"/>
    </location>
</feature>
<feature type="binding site" evidence="1">
    <location>
        <position position="36"/>
    </location>
    <ligand>
        <name>[4Fe-4S] cluster</name>
        <dbReference type="ChEBI" id="CHEBI:49883"/>
        <note>ligand shared with heterodimeric partner</note>
    </ligand>
</feature>
<feature type="binding site" evidence="1">
    <location>
        <begin position="425"/>
        <end position="426"/>
    </location>
    <ligand>
        <name>substrate</name>
    </ligand>
</feature>
<accession>A8G3Q9</accession>
<gene>
    <name evidence="1" type="primary">chlB</name>
    <name type="ordered locus">P9215_06251</name>
</gene>
<protein>
    <recommendedName>
        <fullName evidence="1">Light-independent protochlorophyllide reductase subunit B</fullName>
        <shortName evidence="1">DPOR subunit B</shortName>
        <shortName evidence="1">LI-POR subunit B</shortName>
        <ecNumber evidence="1">1.3.7.7</ecNumber>
    </recommendedName>
</protein>
<evidence type="ECO:0000255" key="1">
    <source>
        <dbReference type="HAMAP-Rule" id="MF_00353"/>
    </source>
</evidence>
<keyword id="KW-0004">4Fe-4S</keyword>
<keyword id="KW-0067">ATP-binding</keyword>
<keyword id="KW-0149">Chlorophyll biosynthesis</keyword>
<keyword id="KW-0408">Iron</keyword>
<keyword id="KW-0411">Iron-sulfur</keyword>
<keyword id="KW-0479">Metal-binding</keyword>
<keyword id="KW-0547">Nucleotide-binding</keyword>
<keyword id="KW-0560">Oxidoreductase</keyword>
<keyword id="KW-0602">Photosynthesis</keyword>
<reference key="1">
    <citation type="journal article" date="2007" name="PLoS Genet.">
        <title>Patterns and implications of gene gain and loss in the evolution of Prochlorococcus.</title>
        <authorList>
            <person name="Kettler G.C."/>
            <person name="Martiny A.C."/>
            <person name="Huang K."/>
            <person name="Zucker J."/>
            <person name="Coleman M.L."/>
            <person name="Rodrigue S."/>
            <person name="Chen F."/>
            <person name="Lapidus A."/>
            <person name="Ferriera S."/>
            <person name="Johnson J."/>
            <person name="Steglich C."/>
            <person name="Church G.M."/>
            <person name="Richardson P."/>
            <person name="Chisholm S.W."/>
        </authorList>
    </citation>
    <scope>NUCLEOTIDE SEQUENCE [LARGE SCALE GENOMIC DNA]</scope>
    <source>
        <strain>MIT 9215</strain>
    </source>
</reference>